<feature type="chain" id="PRO_0000256398" description="1-deoxy-D-xylulose-5-phosphate synthase">
    <location>
        <begin position="1"/>
        <end position="640"/>
    </location>
</feature>
<feature type="binding site" evidence="1">
    <location>
        <position position="75"/>
    </location>
    <ligand>
        <name>thiamine diphosphate</name>
        <dbReference type="ChEBI" id="CHEBI:58937"/>
    </ligand>
</feature>
<feature type="binding site" evidence="1">
    <location>
        <begin position="117"/>
        <end position="119"/>
    </location>
    <ligand>
        <name>thiamine diphosphate</name>
        <dbReference type="ChEBI" id="CHEBI:58937"/>
    </ligand>
</feature>
<feature type="binding site" evidence="1">
    <location>
        <position position="146"/>
    </location>
    <ligand>
        <name>Mg(2+)</name>
        <dbReference type="ChEBI" id="CHEBI:18420"/>
    </ligand>
</feature>
<feature type="binding site" evidence="1">
    <location>
        <begin position="147"/>
        <end position="148"/>
    </location>
    <ligand>
        <name>thiamine diphosphate</name>
        <dbReference type="ChEBI" id="CHEBI:58937"/>
    </ligand>
</feature>
<feature type="binding site" evidence="1">
    <location>
        <position position="175"/>
    </location>
    <ligand>
        <name>Mg(2+)</name>
        <dbReference type="ChEBI" id="CHEBI:18420"/>
    </ligand>
</feature>
<feature type="binding site" evidence="1">
    <location>
        <position position="175"/>
    </location>
    <ligand>
        <name>thiamine diphosphate</name>
        <dbReference type="ChEBI" id="CHEBI:58937"/>
    </ligand>
</feature>
<feature type="binding site" evidence="1">
    <location>
        <position position="370"/>
    </location>
    <ligand>
        <name>thiamine diphosphate</name>
        <dbReference type="ChEBI" id="CHEBI:58937"/>
    </ligand>
</feature>
<accession>Q3KM28</accession>
<reference key="1">
    <citation type="journal article" date="2005" name="Infect. Immun.">
        <title>Comparative genomic analysis of Chlamydia trachomatis oculotropic and genitotropic strains.</title>
        <authorList>
            <person name="Carlson J.H."/>
            <person name="Porcella S.F."/>
            <person name="McClarty G."/>
            <person name="Caldwell H.D."/>
        </authorList>
    </citation>
    <scope>NUCLEOTIDE SEQUENCE [LARGE SCALE GENOMIC DNA]</scope>
    <source>
        <strain>ATCC VR-571B / DSM 19440 / HAR-13</strain>
    </source>
</reference>
<sequence>MTYSLLPHIHSPQDLHALSLDKLPVLCDEIRNKIIESLSLTGGHLASNLGGVELTVALHYVFSSPDDQFIFDVGHQSYVHKLLTGRNTEAFSNIRHDNGLSGFTTPQESNHDIFFSGHAGNALSLALGLAKGSSNSSSHILPILGDAAFSCGLTLEALNNIPADLSKFIIVLNDNQMSISENVGNIPQGISHWMYPQKISKLSQKIHSWIQNLPSFLHKKKTLSHKVDIALKSLSHPLFEQFGLHYVGPIDGHNVKKLVQALQMIKDQPQPILFHVCTVKGNGLAEAERDPIRYHGVKAHFQNTSLKKTSGNVELQTPISFPQHAGNILCRLGKKYPQLQVVTPAMSLGSCLEDFRKQFPDRFTDVGIAEGHAVTFSAGIARSGTPVCCSIYSTFLHRAMDNVFHDVCMQELPVIFAIDRAGLAFHDGRSHHGIYDLGFLCSMPNMVICQPRNALVLERLFFSSLLWKSPCAIRYPNIPANEKASNSFFPFSPILPGEAEILCQGDDLLLIALGHMCNTALTVKEHLLDYGISTTVVDPIFIKPLDRKLLQSLLTHHSKVIILEEHSIHGGLGSEFLLFLNQHNIKADVLSLGVPDMFIPHGNPETILNLIGLTSDHITQRILSHFKFFTPIPIERFFKA</sequence>
<organism>
    <name type="scientific">Chlamydia trachomatis serovar A (strain ATCC VR-571B / DSM 19440 / HAR-13)</name>
    <dbReference type="NCBI Taxonomy" id="315277"/>
    <lineage>
        <taxon>Bacteria</taxon>
        <taxon>Pseudomonadati</taxon>
        <taxon>Chlamydiota</taxon>
        <taxon>Chlamydiia</taxon>
        <taxon>Chlamydiales</taxon>
        <taxon>Chlamydiaceae</taxon>
        <taxon>Chlamydia/Chlamydophila group</taxon>
        <taxon>Chlamydia</taxon>
    </lineage>
</organism>
<comment type="function">
    <text evidence="1">Catalyzes the acyloin condensation reaction between C atoms 2 and 3 of pyruvate and glyceraldehyde 3-phosphate to yield 1-deoxy-D-xylulose-5-phosphate (DXP).</text>
</comment>
<comment type="catalytic activity">
    <reaction evidence="1">
        <text>D-glyceraldehyde 3-phosphate + pyruvate + H(+) = 1-deoxy-D-xylulose 5-phosphate + CO2</text>
        <dbReference type="Rhea" id="RHEA:12605"/>
        <dbReference type="ChEBI" id="CHEBI:15361"/>
        <dbReference type="ChEBI" id="CHEBI:15378"/>
        <dbReference type="ChEBI" id="CHEBI:16526"/>
        <dbReference type="ChEBI" id="CHEBI:57792"/>
        <dbReference type="ChEBI" id="CHEBI:59776"/>
        <dbReference type="EC" id="2.2.1.7"/>
    </reaction>
</comment>
<comment type="cofactor">
    <cofactor evidence="1">
        <name>Mg(2+)</name>
        <dbReference type="ChEBI" id="CHEBI:18420"/>
    </cofactor>
    <text evidence="1">Binds 1 Mg(2+) ion per subunit.</text>
</comment>
<comment type="cofactor">
    <cofactor evidence="1">
        <name>thiamine diphosphate</name>
        <dbReference type="ChEBI" id="CHEBI:58937"/>
    </cofactor>
    <text evidence="1">Binds 1 thiamine pyrophosphate per subunit.</text>
</comment>
<comment type="pathway">
    <text evidence="1">Metabolic intermediate biosynthesis; 1-deoxy-D-xylulose 5-phosphate biosynthesis; 1-deoxy-D-xylulose 5-phosphate from D-glyceraldehyde 3-phosphate and pyruvate: step 1/1.</text>
</comment>
<comment type="subunit">
    <text evidence="1">Homodimer.</text>
</comment>
<comment type="similarity">
    <text evidence="1">Belongs to the transketolase family. DXPS subfamily.</text>
</comment>
<dbReference type="EC" id="2.2.1.7" evidence="1"/>
<dbReference type="EMBL" id="CP000051">
    <property type="protein sequence ID" value="AAX50594.1"/>
    <property type="molecule type" value="Genomic_DNA"/>
</dbReference>
<dbReference type="RefSeq" id="WP_011324685.1">
    <property type="nucleotide sequence ID" value="NC_007429.1"/>
</dbReference>
<dbReference type="SMR" id="Q3KM28"/>
<dbReference type="KEGG" id="cta:CTA_0359"/>
<dbReference type="HOGENOM" id="CLU_009227_1_4_0"/>
<dbReference type="UniPathway" id="UPA00064">
    <property type="reaction ID" value="UER00091"/>
</dbReference>
<dbReference type="Proteomes" id="UP000002532">
    <property type="component" value="Chromosome"/>
</dbReference>
<dbReference type="GO" id="GO:0005829">
    <property type="term" value="C:cytosol"/>
    <property type="evidence" value="ECO:0007669"/>
    <property type="project" value="TreeGrafter"/>
</dbReference>
<dbReference type="GO" id="GO:0008661">
    <property type="term" value="F:1-deoxy-D-xylulose-5-phosphate synthase activity"/>
    <property type="evidence" value="ECO:0007669"/>
    <property type="project" value="UniProtKB-UniRule"/>
</dbReference>
<dbReference type="GO" id="GO:0000287">
    <property type="term" value="F:magnesium ion binding"/>
    <property type="evidence" value="ECO:0007669"/>
    <property type="project" value="UniProtKB-UniRule"/>
</dbReference>
<dbReference type="GO" id="GO:0030976">
    <property type="term" value="F:thiamine pyrophosphate binding"/>
    <property type="evidence" value="ECO:0007669"/>
    <property type="project" value="UniProtKB-UniRule"/>
</dbReference>
<dbReference type="GO" id="GO:0052865">
    <property type="term" value="P:1-deoxy-D-xylulose 5-phosphate biosynthetic process"/>
    <property type="evidence" value="ECO:0007669"/>
    <property type="project" value="UniProtKB-UniPathway"/>
</dbReference>
<dbReference type="GO" id="GO:0019288">
    <property type="term" value="P:isopentenyl diphosphate biosynthetic process, methylerythritol 4-phosphate pathway"/>
    <property type="evidence" value="ECO:0007669"/>
    <property type="project" value="TreeGrafter"/>
</dbReference>
<dbReference type="GO" id="GO:0016114">
    <property type="term" value="P:terpenoid biosynthetic process"/>
    <property type="evidence" value="ECO:0007669"/>
    <property type="project" value="UniProtKB-UniRule"/>
</dbReference>
<dbReference type="GO" id="GO:0009228">
    <property type="term" value="P:thiamine biosynthetic process"/>
    <property type="evidence" value="ECO:0007669"/>
    <property type="project" value="UniProtKB-UniRule"/>
</dbReference>
<dbReference type="CDD" id="cd02007">
    <property type="entry name" value="TPP_DXS"/>
    <property type="match status" value="1"/>
</dbReference>
<dbReference type="CDD" id="cd07033">
    <property type="entry name" value="TPP_PYR_DXS_TK_like"/>
    <property type="match status" value="1"/>
</dbReference>
<dbReference type="FunFam" id="3.40.50.920:FF:000002">
    <property type="entry name" value="1-deoxy-D-xylulose-5-phosphate synthase"/>
    <property type="match status" value="1"/>
</dbReference>
<dbReference type="FunFam" id="3.40.50.970:FF:000104">
    <property type="entry name" value="1-deoxy-D-xylulose-5-phosphate synthase"/>
    <property type="match status" value="1"/>
</dbReference>
<dbReference type="Gene3D" id="3.40.50.920">
    <property type="match status" value="1"/>
</dbReference>
<dbReference type="Gene3D" id="3.40.50.970">
    <property type="match status" value="2"/>
</dbReference>
<dbReference type="HAMAP" id="MF_00315">
    <property type="entry name" value="DXP_synth"/>
    <property type="match status" value="1"/>
</dbReference>
<dbReference type="InterPro" id="IPR005477">
    <property type="entry name" value="Dxylulose-5-P_synthase"/>
</dbReference>
<dbReference type="InterPro" id="IPR029061">
    <property type="entry name" value="THDP-binding"/>
</dbReference>
<dbReference type="InterPro" id="IPR009014">
    <property type="entry name" value="Transketo_C/PFOR_II"/>
</dbReference>
<dbReference type="InterPro" id="IPR005475">
    <property type="entry name" value="Transketolase-like_Pyr-bd"/>
</dbReference>
<dbReference type="InterPro" id="IPR033248">
    <property type="entry name" value="Transketolase_C"/>
</dbReference>
<dbReference type="InterPro" id="IPR049557">
    <property type="entry name" value="Transketolase_CS"/>
</dbReference>
<dbReference type="NCBIfam" id="TIGR00204">
    <property type="entry name" value="dxs"/>
    <property type="match status" value="1"/>
</dbReference>
<dbReference type="NCBIfam" id="NF003933">
    <property type="entry name" value="PRK05444.2-2"/>
    <property type="match status" value="1"/>
</dbReference>
<dbReference type="PANTHER" id="PTHR43322">
    <property type="entry name" value="1-D-DEOXYXYLULOSE 5-PHOSPHATE SYNTHASE-RELATED"/>
    <property type="match status" value="1"/>
</dbReference>
<dbReference type="PANTHER" id="PTHR43322:SF5">
    <property type="entry name" value="1-DEOXY-D-XYLULOSE-5-PHOSPHATE SYNTHASE, CHLOROPLASTIC"/>
    <property type="match status" value="1"/>
</dbReference>
<dbReference type="Pfam" id="PF13292">
    <property type="entry name" value="DXP_synthase_N"/>
    <property type="match status" value="1"/>
</dbReference>
<dbReference type="Pfam" id="PF02779">
    <property type="entry name" value="Transket_pyr"/>
    <property type="match status" value="1"/>
</dbReference>
<dbReference type="Pfam" id="PF02780">
    <property type="entry name" value="Transketolase_C"/>
    <property type="match status" value="1"/>
</dbReference>
<dbReference type="SMART" id="SM00861">
    <property type="entry name" value="Transket_pyr"/>
    <property type="match status" value="1"/>
</dbReference>
<dbReference type="SUPFAM" id="SSF52518">
    <property type="entry name" value="Thiamin diphosphate-binding fold (THDP-binding)"/>
    <property type="match status" value="2"/>
</dbReference>
<dbReference type="SUPFAM" id="SSF52922">
    <property type="entry name" value="TK C-terminal domain-like"/>
    <property type="match status" value="1"/>
</dbReference>
<dbReference type="PROSITE" id="PS00801">
    <property type="entry name" value="TRANSKETOLASE_1"/>
    <property type="match status" value="1"/>
</dbReference>
<protein>
    <recommendedName>
        <fullName evidence="1">1-deoxy-D-xylulose-5-phosphate synthase</fullName>
        <ecNumber evidence="1">2.2.1.7</ecNumber>
    </recommendedName>
    <alternativeName>
        <fullName evidence="1">1-deoxyxylulose-5-phosphate synthase</fullName>
        <shortName evidence="1">DXP synthase</shortName>
        <shortName evidence="1">DXPS</shortName>
    </alternativeName>
</protein>
<keyword id="KW-0414">Isoprene biosynthesis</keyword>
<keyword id="KW-0460">Magnesium</keyword>
<keyword id="KW-0479">Metal-binding</keyword>
<keyword id="KW-0784">Thiamine biosynthesis</keyword>
<keyword id="KW-0786">Thiamine pyrophosphate</keyword>
<keyword id="KW-0808">Transferase</keyword>
<proteinExistence type="inferred from homology"/>
<name>DXS_CHLTA</name>
<evidence type="ECO:0000255" key="1">
    <source>
        <dbReference type="HAMAP-Rule" id="MF_00315"/>
    </source>
</evidence>
<gene>
    <name evidence="1" type="primary">dxs</name>
    <name type="ordered locus">CTA_0359</name>
</gene>